<organism>
    <name type="scientific">Escherichia coli (strain K12)</name>
    <dbReference type="NCBI Taxonomy" id="83333"/>
    <lineage>
        <taxon>Bacteria</taxon>
        <taxon>Pseudomonadati</taxon>
        <taxon>Pseudomonadota</taxon>
        <taxon>Gammaproteobacteria</taxon>
        <taxon>Enterobacterales</taxon>
        <taxon>Enterobacteriaceae</taxon>
        <taxon>Escherichia</taxon>
    </lineage>
</organism>
<name>YIDX_ECOLI</name>
<dbReference type="EMBL" id="L10328">
    <property type="protein sequence ID" value="AAA62047.1"/>
    <property type="status" value="ALT_FRAME"/>
    <property type="molecule type" value="Genomic_DNA"/>
</dbReference>
<dbReference type="EMBL" id="U00096">
    <property type="protein sequence ID" value="AAT48200.1"/>
    <property type="molecule type" value="Genomic_DNA"/>
</dbReference>
<dbReference type="EMBL" id="AP009048">
    <property type="protein sequence ID" value="BAE77598.1"/>
    <property type="molecule type" value="Genomic_DNA"/>
</dbReference>
<dbReference type="RefSeq" id="WP_000772934.1">
    <property type="nucleotide sequence ID" value="NZ_STEB01000015.1"/>
</dbReference>
<dbReference type="RefSeq" id="YP_026240.1">
    <property type="nucleotide sequence ID" value="NC_000913.3"/>
</dbReference>
<dbReference type="BioGRID" id="4262578">
    <property type="interactions" value="5"/>
</dbReference>
<dbReference type="DIP" id="DIP-48039N"/>
<dbReference type="FunCoup" id="P0ADM6">
    <property type="interactions" value="228"/>
</dbReference>
<dbReference type="IntAct" id="P0ADM6">
    <property type="interactions" value="2"/>
</dbReference>
<dbReference type="STRING" id="511145.b3696"/>
<dbReference type="PaxDb" id="511145-b3696"/>
<dbReference type="EnsemblBacteria" id="AAT48200">
    <property type="protein sequence ID" value="AAT48200"/>
    <property type="gene ID" value="b3696"/>
</dbReference>
<dbReference type="GeneID" id="948202"/>
<dbReference type="KEGG" id="ecj:JW5858"/>
<dbReference type="KEGG" id="eco:b3696"/>
<dbReference type="KEGG" id="ecoc:C3026_20035"/>
<dbReference type="PATRIC" id="fig|511145.12.peg.3819"/>
<dbReference type="EchoBASE" id="EB1670"/>
<dbReference type="eggNOG" id="ENOG503253A">
    <property type="taxonomic scope" value="Bacteria"/>
</dbReference>
<dbReference type="HOGENOM" id="CLU_094520_0_0_6"/>
<dbReference type="InParanoid" id="P0ADM6"/>
<dbReference type="OMA" id="TCVGQKS"/>
<dbReference type="OrthoDB" id="6570813at2"/>
<dbReference type="BioCyc" id="EcoCyc:EG11719-MONOMER"/>
<dbReference type="PRO" id="PR:P0ADM6"/>
<dbReference type="Proteomes" id="UP000000625">
    <property type="component" value="Chromosome"/>
</dbReference>
<dbReference type="GO" id="GO:0016020">
    <property type="term" value="C:membrane"/>
    <property type="evidence" value="ECO:0007669"/>
    <property type="project" value="UniProtKB-SubCell"/>
</dbReference>
<dbReference type="NCBIfam" id="NF007580">
    <property type="entry name" value="PRK10215.1"/>
    <property type="match status" value="1"/>
</dbReference>
<dbReference type="PROSITE" id="PS51257">
    <property type="entry name" value="PROKAR_LIPOPROTEIN"/>
    <property type="match status" value="1"/>
</dbReference>
<gene>
    <name type="primary">yidX</name>
    <name type="ordered locus">b3696</name>
    <name type="ordered locus">JW5858</name>
</gene>
<comment type="subcellular location">
    <subcellularLocation>
        <location evidence="2">Membrane</location>
        <topology evidence="2">Single-pass membrane protein</topology>
    </subcellularLocation>
</comment>
<comment type="sequence caution" evidence="2">
    <conflict type="frameshift">
        <sequence resource="EMBL-CDS" id="AAA62047"/>
    </conflict>
</comment>
<accession>P0ADM6</accession>
<accession>P31461</accession>
<accession>P76736</accession>
<accession>Q2M808</accession>
<feature type="chain" id="PRO_0000169634" description="Uncharacterized protein YidX">
    <location>
        <begin position="1"/>
        <end position="218"/>
    </location>
</feature>
<feature type="transmembrane region" description="Helical" evidence="1">
    <location>
        <begin position="11"/>
        <end position="31"/>
    </location>
</feature>
<evidence type="ECO:0000255" key="1"/>
<evidence type="ECO:0000305" key="2"/>
<keyword id="KW-0472">Membrane</keyword>
<keyword id="KW-1185">Reference proteome</keyword>
<keyword id="KW-0812">Transmembrane</keyword>
<keyword id="KW-1133">Transmembrane helix</keyword>
<proteinExistence type="predicted"/>
<reference key="1">
    <citation type="journal article" date="1993" name="Genomics">
        <title>DNA sequence and analysis of 136 kilobases of the Escherichia coli genome: organizational symmetry around the origin of replication.</title>
        <authorList>
            <person name="Burland V.D."/>
            <person name="Plunkett G. III"/>
            <person name="Daniels D.L."/>
            <person name="Blattner F.R."/>
        </authorList>
    </citation>
    <scope>NUCLEOTIDE SEQUENCE [LARGE SCALE GENOMIC DNA]</scope>
    <source>
        <strain>K12 / MG1655 / ATCC 47076</strain>
    </source>
</reference>
<reference key="2">
    <citation type="journal article" date="1997" name="Science">
        <title>The complete genome sequence of Escherichia coli K-12.</title>
        <authorList>
            <person name="Blattner F.R."/>
            <person name="Plunkett G. III"/>
            <person name="Bloch C.A."/>
            <person name="Perna N.T."/>
            <person name="Burland V."/>
            <person name="Riley M."/>
            <person name="Collado-Vides J."/>
            <person name="Glasner J.D."/>
            <person name="Rode C.K."/>
            <person name="Mayhew G.F."/>
            <person name="Gregor J."/>
            <person name="Davis N.W."/>
            <person name="Kirkpatrick H.A."/>
            <person name="Goeden M.A."/>
            <person name="Rose D.J."/>
            <person name="Mau B."/>
            <person name="Shao Y."/>
        </authorList>
    </citation>
    <scope>NUCLEOTIDE SEQUENCE [LARGE SCALE GENOMIC DNA]</scope>
    <scope>SEQUENCE REVISION</scope>
    <source>
        <strain>K12 / MG1655 / ATCC 47076</strain>
    </source>
</reference>
<reference key="3">
    <citation type="journal article" date="2006" name="Nucleic Acids Res.">
        <title>Escherichia coli K-12: a cooperatively developed annotation snapshot -- 2005.</title>
        <authorList>
            <person name="Riley M."/>
            <person name="Abe T."/>
            <person name="Arnaud M.B."/>
            <person name="Berlyn M.K.B."/>
            <person name="Blattner F.R."/>
            <person name="Chaudhuri R.R."/>
            <person name="Glasner J.D."/>
            <person name="Horiuchi T."/>
            <person name="Keseler I.M."/>
            <person name="Kosuge T."/>
            <person name="Mori H."/>
            <person name="Perna N.T."/>
            <person name="Plunkett G. III"/>
            <person name="Rudd K.E."/>
            <person name="Serres M.H."/>
            <person name="Thomas G.H."/>
            <person name="Thomson N.R."/>
            <person name="Wishart D."/>
            <person name="Wanner B.L."/>
        </authorList>
    </citation>
    <scope>SEQUENCE REVISION</scope>
</reference>
<reference key="4">
    <citation type="journal article" date="2006" name="Mol. Syst. Biol.">
        <title>Highly accurate genome sequences of Escherichia coli K-12 strains MG1655 and W3110.</title>
        <authorList>
            <person name="Hayashi K."/>
            <person name="Morooka N."/>
            <person name="Yamamoto Y."/>
            <person name="Fujita K."/>
            <person name="Isono K."/>
            <person name="Choi S."/>
            <person name="Ohtsubo E."/>
            <person name="Baba T."/>
            <person name="Wanner B.L."/>
            <person name="Mori H."/>
            <person name="Horiuchi T."/>
        </authorList>
    </citation>
    <scope>NUCLEOTIDE SEQUENCE [LARGE SCALE GENOMIC DNA]</scope>
    <source>
        <strain>K12 / W3110 / ATCC 27325 / DSM 5911</strain>
    </source>
</reference>
<sequence>MKLNFKGFFKAAGLFPLALMLSGCISYALVSHTAKGSSGKYQSQSDTITGLSQAKDSNGTKGYVFVGESLDYLITDGADDIVKMLNDPALNRHNIQVADDARFVLNAGKKKFTGTISLYYYWNNEEEKALATHYGFACGVQHCTRSLENLKGTIHEKNKNMDYSKVMAFYHPFKVRFYEYYSPRGIPDGVSAALLPVTVTLDIITAPLQFLVVYAVNQ</sequence>
<protein>
    <recommendedName>
        <fullName>Uncharacterized protein YidX</fullName>
    </recommendedName>
</protein>